<gene>
    <name type="primary">S3</name>
</gene>
<evidence type="ECO:0000250" key="1">
    <source>
        <dbReference type="UniProtKB" id="P12002"/>
    </source>
</evidence>
<evidence type="ECO:0000269" key="2">
    <source>
    </source>
</evidence>
<evidence type="ECO:0000269" key="3">
    <source>
    </source>
</evidence>
<evidence type="ECO:0000269" key="4">
    <source>
    </source>
</evidence>
<evidence type="ECO:0000305" key="5"/>
<evidence type="ECO:0000305" key="6">
    <source>
    </source>
</evidence>
<reference key="1">
    <citation type="journal article" date="1986" name="Biochem. Biophys. Res. Commun.">
        <title>Biosynthesis of reovirus-specified polypeptides. Molecular cDNA cloning and nucleotide sequence of the reovirus serotype 1 Lang strain s3 mRNA which encodes the nonstructural RNA-binding protein sigma NS.</title>
        <authorList>
            <person name="George C.X."/>
            <person name="Atwater J.A."/>
            <person name="Samuel C.E."/>
        </authorList>
    </citation>
    <scope>NUCLEOTIDE SEQUENCE [GENOMIC RNA]</scope>
</reference>
<reference key="2">
    <citation type="journal article" date="1987" name="Virology">
        <title>Comparison of the reovirus serotype 1, 2, and 3 S3 genome segments encoding the nonstructural protein sigma NS.</title>
        <authorList>
            <person name="Wiener J.R."/>
            <person name="Joklik W.K."/>
        </authorList>
    </citation>
    <scope>NUCLEOTIDE SEQUENCE [GENOMIC RNA]</scope>
</reference>
<reference key="3">
    <citation type="journal article" date="1998" name="Virology">
        <title>Amino terminus of reovirus nonstructural protein sigma NS is important for ssRNA binding and nucleoprotein complex formation.</title>
        <authorList>
            <person name="Gillian A.L."/>
            <person name="Nibert M.L."/>
        </authorList>
    </citation>
    <scope>FUNCTION</scope>
    <scope>SUBUNIT</scope>
    <scope>RNA-BINDING</scope>
</reference>
<reference key="4">
    <citation type="journal article" date="2003" name="J. Virol.">
        <title>Reovirus sigma NS protein localizes to inclusions through an association requiring the mu NS amino terminus.</title>
        <authorList>
            <person name="Miller C.L."/>
            <person name="Broering T.J."/>
            <person name="Parker J.S.L."/>
            <person name="Arnold M.M."/>
            <person name="Nibert M.L."/>
        </authorList>
    </citation>
    <scope>INTERACTION WITH PROTEIN MU-NS</scope>
</reference>
<reference key="5">
    <citation type="journal article" date="2017" name="J. Virol.">
        <title>Mammalian Orthoreovirus Factories Modulate Stress Granule Protein Localization by Interaction with G3BP1.</title>
        <authorList>
            <person name="Choudhury P."/>
            <person name="Bussiere L.D."/>
            <person name="Miller C.L."/>
        </authorList>
    </citation>
    <scope>FUNCTION</scope>
    <scope>INTERACTION WITH HOST G3BP1</scope>
    <scope>INTERACTION WITH PROTEIN MU-NS</scope>
    <scope>SUBCELLULAR LOCATION</scope>
</reference>
<accession>P07940</accession>
<feature type="chain" id="PRO_0000222761" description="Protein sigma-NS">
    <location>
        <begin position="1"/>
        <end position="366"/>
    </location>
</feature>
<feature type="region of interest" description="Important for ssRNA-binding and formation of complexes" evidence="4">
    <location>
        <begin position="1"/>
        <end position="11"/>
    </location>
</feature>
<feature type="sequence conflict" description="In Ref. 2; AAA47281." evidence="5" ref="2">
    <original>V</original>
    <variation>I</variation>
    <location>
        <position position="250"/>
    </location>
</feature>
<organismHost>
    <name type="scientific">Mammalia</name>
    <dbReference type="NCBI Taxonomy" id="40674"/>
</organismHost>
<keyword id="KW-1035">Host cytoplasm</keyword>
<keyword id="KW-1185">Reference proteome</keyword>
<keyword id="KW-0694">RNA-binding</keyword>
<proteinExistence type="evidence at protein level"/>
<protein>
    <recommendedName>
        <fullName>Protein sigma-NS</fullName>
        <shortName>SigmaNS</shortName>
    </recommendedName>
</protein>
<comment type="function">
    <text evidence="3 4">Protein that binds to ssRNA and participates with protein mu-NS in forming the matrix of viral factories, which are large inclusions in the host cytoplasm where replication intermediates are assembled and viral RNA replication takes place (PubMed:9448684). Plays a role in the inhibition of the integrated stress response (ISR) to escape from host cell translational shutoff (PubMed:28794026). Participates in the disruption of stress granules (SG) through its association with host G3BP1 and mu-NS (PubMed:28794026).</text>
</comment>
<comment type="subunit">
    <text evidence="2 3 6">Homooligomer; in presence of RNA (Probable). Interacts with protein mu-NS; this interaction allows the localization of sigma-NS to the viral factories (PubMed:12663763, PubMed:28794026). Interacts with host G3BP1 (via C-terminus); this interaction induces the relocalization of G3BP1 and other SG proteins to the viral factories periphery (PubMed:28794026).</text>
</comment>
<comment type="subcellular location">
    <subcellularLocation>
        <location evidence="1">Host cytoplasm</location>
    </subcellularLocation>
    <text evidence="1">Localizes to the viral factories formed by mu-NS.</text>
</comment>
<comment type="miscellaneous">
    <text evidence="3">There is a strain variablity in the inhibition of the host integrated stress response (ISR). There is a correlation with the abilities of the strains to prevent upstream PKR activation and EIF2S1/eIF2-alpha phosphorylation.</text>
</comment>
<comment type="similarity">
    <text evidence="5">Belongs to the orthoreovirus sigma-NS protein family.</text>
</comment>
<sequence>MASSLRAAISKIKRDDVGQQVCPNYVMLRSSVTTKVVRNVVEYQIRTGGFFSCLAMLRPLQYAKRERLLGQRNLERISTRDILQTRDLHSLCMPTPDAPMSNHQAATMRELICSYFKVDHTDGLKYIPMDERYSPSSLARLFTMGMAGLHITTEPSYKRVPIMHLAADLDCMTLALPYMITLDGDTVVPVAPTLSAEQLLDDGLKGLACMDISYGCEVDASNRSAGDQSMDSSRCINELYCEETAEAICVLKTCLVLNCMQFKLEMDDLAHNATELDKIQMMIPFSERVFRMASSFATIDAQCFRFCVMMKDKNLKIDMRETMRLWTRSALDDSVVTSSLSISLDRGRWVAADATDARLLVFPIRV</sequence>
<dbReference type="EMBL" id="M14325">
    <property type="protein sequence ID" value="AAA47273.1"/>
    <property type="molecule type" value="Genomic_RNA"/>
</dbReference>
<dbReference type="EMBL" id="M18389">
    <property type="protein sequence ID" value="AAA47281.1"/>
    <property type="molecule type" value="Genomic_RNA"/>
</dbReference>
<dbReference type="PIR" id="A25068">
    <property type="entry name" value="MNXRST"/>
</dbReference>
<dbReference type="SMR" id="P07940"/>
<dbReference type="Proteomes" id="UP000007253">
    <property type="component" value="Genome"/>
</dbReference>
<dbReference type="GO" id="GO:0030430">
    <property type="term" value="C:host cell cytoplasm"/>
    <property type="evidence" value="ECO:0007669"/>
    <property type="project" value="UniProtKB-SubCell"/>
</dbReference>
<dbReference type="GO" id="GO:0003968">
    <property type="term" value="F:RNA-directed RNA polymerase activity"/>
    <property type="evidence" value="ECO:0007669"/>
    <property type="project" value="InterPro"/>
</dbReference>
<dbReference type="GO" id="GO:0003727">
    <property type="term" value="F:single-stranded RNA binding"/>
    <property type="evidence" value="ECO:0007669"/>
    <property type="project" value="InterPro"/>
</dbReference>
<dbReference type="InterPro" id="IPR002507">
    <property type="entry name" value="Reovirus_polyG_pol"/>
</dbReference>
<dbReference type="Pfam" id="PF01518">
    <property type="entry name" value="PolyG_pol"/>
    <property type="match status" value="1"/>
</dbReference>
<organism>
    <name type="scientific">Reovirus type 1 (strain Lang)</name>
    <name type="common">T1L</name>
    <name type="synonym">Mammalian orthoreovirus 1</name>
    <dbReference type="NCBI Taxonomy" id="10884"/>
    <lineage>
        <taxon>Viruses</taxon>
        <taxon>Riboviria</taxon>
        <taxon>Orthornavirae</taxon>
        <taxon>Duplornaviricota</taxon>
        <taxon>Resentoviricetes</taxon>
        <taxon>Reovirales</taxon>
        <taxon>Spinareoviridae</taxon>
        <taxon>Orthoreovirus</taxon>
        <taxon>Mammalian orthoreovirus</taxon>
    </lineage>
</organism>
<name>SIGNS_REOVL</name>